<sequence length="59" mass="6546">MAKTIKVTQTKSSIGRLPKHKATLIGLGLRRIGHTVEREDTPAVRGMVNLVSYMVKVEE</sequence>
<name>RL30_YERPA</name>
<proteinExistence type="inferred from homology"/>
<protein>
    <recommendedName>
        <fullName evidence="1">Large ribosomal subunit protein uL30</fullName>
    </recommendedName>
    <alternativeName>
        <fullName evidence="2">50S ribosomal protein L30</fullName>
    </alternativeName>
</protein>
<feature type="chain" id="PRO_0000273897" description="Large ribosomal subunit protein uL30">
    <location>
        <begin position="1"/>
        <end position="59"/>
    </location>
</feature>
<organism>
    <name type="scientific">Yersinia pestis bv. Antiqua (strain Antiqua)</name>
    <dbReference type="NCBI Taxonomy" id="360102"/>
    <lineage>
        <taxon>Bacteria</taxon>
        <taxon>Pseudomonadati</taxon>
        <taxon>Pseudomonadota</taxon>
        <taxon>Gammaproteobacteria</taxon>
        <taxon>Enterobacterales</taxon>
        <taxon>Yersiniaceae</taxon>
        <taxon>Yersinia</taxon>
    </lineage>
</organism>
<gene>
    <name evidence="1" type="primary">rpmD</name>
    <name type="ordered locus">YPA_3245</name>
</gene>
<comment type="subunit">
    <text evidence="1">Part of the 50S ribosomal subunit.</text>
</comment>
<comment type="similarity">
    <text evidence="1">Belongs to the universal ribosomal protein uL30 family.</text>
</comment>
<accession>Q1C2W5</accession>
<evidence type="ECO:0000255" key="1">
    <source>
        <dbReference type="HAMAP-Rule" id="MF_01371"/>
    </source>
</evidence>
<evidence type="ECO:0000305" key="2"/>
<dbReference type="EMBL" id="CP000308">
    <property type="protein sequence ID" value="ABG15207.1"/>
    <property type="molecule type" value="Genomic_DNA"/>
</dbReference>
<dbReference type="RefSeq" id="WP_002213339.1">
    <property type="nucleotide sequence ID" value="NZ_CP009906.1"/>
</dbReference>
<dbReference type="SMR" id="Q1C2W5"/>
<dbReference type="GeneID" id="97454249"/>
<dbReference type="KEGG" id="ypa:YPA_3245"/>
<dbReference type="Proteomes" id="UP000001971">
    <property type="component" value="Chromosome"/>
</dbReference>
<dbReference type="GO" id="GO:0022625">
    <property type="term" value="C:cytosolic large ribosomal subunit"/>
    <property type="evidence" value="ECO:0007669"/>
    <property type="project" value="TreeGrafter"/>
</dbReference>
<dbReference type="GO" id="GO:0003735">
    <property type="term" value="F:structural constituent of ribosome"/>
    <property type="evidence" value="ECO:0007669"/>
    <property type="project" value="InterPro"/>
</dbReference>
<dbReference type="GO" id="GO:0006412">
    <property type="term" value="P:translation"/>
    <property type="evidence" value="ECO:0007669"/>
    <property type="project" value="UniProtKB-UniRule"/>
</dbReference>
<dbReference type="CDD" id="cd01658">
    <property type="entry name" value="Ribosomal_L30"/>
    <property type="match status" value="1"/>
</dbReference>
<dbReference type="FunFam" id="3.30.1390.20:FF:000001">
    <property type="entry name" value="50S ribosomal protein L30"/>
    <property type="match status" value="1"/>
</dbReference>
<dbReference type="Gene3D" id="3.30.1390.20">
    <property type="entry name" value="Ribosomal protein L30, ferredoxin-like fold domain"/>
    <property type="match status" value="1"/>
</dbReference>
<dbReference type="HAMAP" id="MF_01371_B">
    <property type="entry name" value="Ribosomal_uL30_B"/>
    <property type="match status" value="1"/>
</dbReference>
<dbReference type="InterPro" id="IPR036919">
    <property type="entry name" value="Ribo_uL30_ferredoxin-like_sf"/>
</dbReference>
<dbReference type="InterPro" id="IPR005996">
    <property type="entry name" value="Ribosomal_uL30_bac-type"/>
</dbReference>
<dbReference type="InterPro" id="IPR018038">
    <property type="entry name" value="Ribosomal_uL30_CS"/>
</dbReference>
<dbReference type="InterPro" id="IPR016082">
    <property type="entry name" value="Ribosomal_uL30_ferredoxin-like"/>
</dbReference>
<dbReference type="NCBIfam" id="TIGR01308">
    <property type="entry name" value="rpmD_bact"/>
    <property type="match status" value="1"/>
</dbReference>
<dbReference type="PANTHER" id="PTHR15892:SF2">
    <property type="entry name" value="LARGE RIBOSOMAL SUBUNIT PROTEIN UL30M"/>
    <property type="match status" value="1"/>
</dbReference>
<dbReference type="PANTHER" id="PTHR15892">
    <property type="entry name" value="MITOCHONDRIAL RIBOSOMAL PROTEIN L30"/>
    <property type="match status" value="1"/>
</dbReference>
<dbReference type="Pfam" id="PF00327">
    <property type="entry name" value="Ribosomal_L30"/>
    <property type="match status" value="1"/>
</dbReference>
<dbReference type="PIRSF" id="PIRSF002211">
    <property type="entry name" value="Ribosomal_L30_bac-type"/>
    <property type="match status" value="1"/>
</dbReference>
<dbReference type="SUPFAM" id="SSF55129">
    <property type="entry name" value="Ribosomal protein L30p/L7e"/>
    <property type="match status" value="1"/>
</dbReference>
<dbReference type="PROSITE" id="PS00634">
    <property type="entry name" value="RIBOSOMAL_L30"/>
    <property type="match status" value="1"/>
</dbReference>
<keyword id="KW-0687">Ribonucleoprotein</keyword>
<keyword id="KW-0689">Ribosomal protein</keyword>
<reference key="1">
    <citation type="journal article" date="2006" name="J. Bacteriol.">
        <title>Complete genome sequence of Yersinia pestis strains Antiqua and Nepal516: evidence of gene reduction in an emerging pathogen.</title>
        <authorList>
            <person name="Chain P.S.G."/>
            <person name="Hu P."/>
            <person name="Malfatti S.A."/>
            <person name="Radnedge L."/>
            <person name="Larimer F."/>
            <person name="Vergez L.M."/>
            <person name="Worsham P."/>
            <person name="Chu M.C."/>
            <person name="Andersen G.L."/>
        </authorList>
    </citation>
    <scope>NUCLEOTIDE SEQUENCE [LARGE SCALE GENOMIC DNA]</scope>
    <source>
        <strain>Antiqua</strain>
    </source>
</reference>